<reference key="1">
    <citation type="journal article" date="2000" name="Nature">
        <title>Sequence and analysis of chromosome 1 of the plant Arabidopsis thaliana.</title>
        <authorList>
            <person name="Theologis A."/>
            <person name="Ecker J.R."/>
            <person name="Palm C.J."/>
            <person name="Federspiel N.A."/>
            <person name="Kaul S."/>
            <person name="White O."/>
            <person name="Alonso J."/>
            <person name="Altafi H."/>
            <person name="Araujo R."/>
            <person name="Bowman C.L."/>
            <person name="Brooks S.Y."/>
            <person name="Buehler E."/>
            <person name="Chan A."/>
            <person name="Chao Q."/>
            <person name="Chen H."/>
            <person name="Cheuk R.F."/>
            <person name="Chin C.W."/>
            <person name="Chung M.K."/>
            <person name="Conn L."/>
            <person name="Conway A.B."/>
            <person name="Conway A.R."/>
            <person name="Creasy T.H."/>
            <person name="Dewar K."/>
            <person name="Dunn P."/>
            <person name="Etgu P."/>
            <person name="Feldblyum T.V."/>
            <person name="Feng J.-D."/>
            <person name="Fong B."/>
            <person name="Fujii C.Y."/>
            <person name="Gill J.E."/>
            <person name="Goldsmith A.D."/>
            <person name="Haas B."/>
            <person name="Hansen N.F."/>
            <person name="Hughes B."/>
            <person name="Huizar L."/>
            <person name="Hunter J.L."/>
            <person name="Jenkins J."/>
            <person name="Johnson-Hopson C."/>
            <person name="Khan S."/>
            <person name="Khaykin E."/>
            <person name="Kim C.J."/>
            <person name="Koo H.L."/>
            <person name="Kremenetskaia I."/>
            <person name="Kurtz D.B."/>
            <person name="Kwan A."/>
            <person name="Lam B."/>
            <person name="Langin-Hooper S."/>
            <person name="Lee A."/>
            <person name="Lee J.M."/>
            <person name="Lenz C.A."/>
            <person name="Li J.H."/>
            <person name="Li Y.-P."/>
            <person name="Lin X."/>
            <person name="Liu S.X."/>
            <person name="Liu Z.A."/>
            <person name="Luros J.S."/>
            <person name="Maiti R."/>
            <person name="Marziali A."/>
            <person name="Militscher J."/>
            <person name="Miranda M."/>
            <person name="Nguyen M."/>
            <person name="Nierman W.C."/>
            <person name="Osborne B.I."/>
            <person name="Pai G."/>
            <person name="Peterson J."/>
            <person name="Pham P.K."/>
            <person name="Rizzo M."/>
            <person name="Rooney T."/>
            <person name="Rowley D."/>
            <person name="Sakano H."/>
            <person name="Salzberg S.L."/>
            <person name="Schwartz J.R."/>
            <person name="Shinn P."/>
            <person name="Southwick A.M."/>
            <person name="Sun H."/>
            <person name="Tallon L.J."/>
            <person name="Tambunga G."/>
            <person name="Toriumi M.J."/>
            <person name="Town C.D."/>
            <person name="Utterback T."/>
            <person name="Van Aken S."/>
            <person name="Vaysberg M."/>
            <person name="Vysotskaia V.S."/>
            <person name="Walker M."/>
            <person name="Wu D."/>
            <person name="Yu G."/>
            <person name="Fraser C.M."/>
            <person name="Venter J.C."/>
            <person name="Davis R.W."/>
        </authorList>
    </citation>
    <scope>NUCLEOTIDE SEQUENCE [LARGE SCALE GENOMIC DNA]</scope>
    <source>
        <strain>cv. Columbia</strain>
    </source>
</reference>
<reference key="2">
    <citation type="journal article" date="2017" name="Plant J.">
        <title>Araport11: a complete reannotation of the Arabidopsis thaliana reference genome.</title>
        <authorList>
            <person name="Cheng C.Y."/>
            <person name="Krishnakumar V."/>
            <person name="Chan A.P."/>
            <person name="Thibaud-Nissen F."/>
            <person name="Schobel S."/>
            <person name="Town C.D."/>
        </authorList>
    </citation>
    <scope>GENOME REANNOTATION</scope>
    <source>
        <strain>cv. Columbia</strain>
    </source>
</reference>
<reference key="3">
    <citation type="submission" date="2005-05" db="EMBL/GenBank/DDBJ databases">
        <authorList>
            <person name="Underwood B.A."/>
            <person name="Xiao Y.-L."/>
            <person name="Moskal W.A. Jr."/>
            <person name="Monaghan E.L."/>
            <person name="Wang W."/>
            <person name="Redman J.C."/>
            <person name="Wu H.C."/>
            <person name="Utterback T."/>
            <person name="Town C.D."/>
        </authorList>
    </citation>
    <scope>NUCLEOTIDE SEQUENCE [LARGE SCALE MRNA]</scope>
    <source>
        <strain>cv. Columbia</strain>
    </source>
</reference>
<reference key="4">
    <citation type="journal article" date="2005" name="Proc. Natl. Acad. Sci. U.S.A.">
        <title>A central role of Arabidopsis thaliana ovate family proteins in networking and subcellular localization of 3-aa loop extension homeodomain proteins.</title>
        <authorList>
            <person name="Hackbusch J."/>
            <person name="Richter K."/>
            <person name="Muller J."/>
            <person name="Salamini F."/>
            <person name="Uhrig J.F."/>
        </authorList>
    </citation>
    <scope>INTERACTION WITH KNAT2 AND KNAT3</scope>
</reference>
<reference key="5">
    <citation type="journal article" date="2011" name="PLoS ONE">
        <title>Arabidopsis ovate family proteins, a novel transcriptional repressor family, control multiple aspects of plant growth and development.</title>
        <authorList>
            <person name="Wang S."/>
            <person name="Chang Y."/>
            <person name="Guo J."/>
            <person name="Zeng Q."/>
            <person name="Ellis B.E."/>
            <person name="Chen J.G."/>
        </authorList>
    </citation>
    <scope>FUNCTION</scope>
    <scope>TISSUE SPECIFICITY</scope>
    <scope>GENE FAMILY</scope>
</reference>
<comment type="function">
    <text evidence="5">Transcriptional repressor that may regulate multiple aspects of plant growth and development through the regulation of BEL1-LIKE (BLH) and KNOX TALE (KNAT) homeodomain transcription factors.</text>
</comment>
<comment type="subunit">
    <text evidence="4">Interacts with KNAT2 and KNAT3.</text>
</comment>
<comment type="subcellular location">
    <subcellularLocation>
        <location evidence="1">Nucleus</location>
    </subcellularLocation>
</comment>
<comment type="tissue specificity">
    <text evidence="5">Expressed in roots, rosette and cauline leaves, shoots, stems, flower buds and siliques.</text>
</comment>
<comment type="miscellaneous">
    <text evidence="6">Plants over-expressing OFP14 have no visible phenotype.</text>
</comment>
<protein>
    <recommendedName>
        <fullName>Transcription repressor OFP14</fullName>
    </recommendedName>
    <alternativeName>
        <fullName>Ovate family protein 14</fullName>
        <shortName>AtOFP14</shortName>
    </alternativeName>
</protein>
<accession>Q9S7T5</accession>
<name>OFP14_ARATH</name>
<gene>
    <name type="primary">OFP14</name>
    <name type="ordered locus">At1g79960</name>
    <name type="ORF">F18B13.4</name>
    <name type="ORF">F19K16.8</name>
</gene>
<evidence type="ECO:0000250" key="1"/>
<evidence type="ECO:0000255" key="2">
    <source>
        <dbReference type="PROSITE-ProRule" id="PRU01090"/>
    </source>
</evidence>
<evidence type="ECO:0000256" key="3">
    <source>
        <dbReference type="SAM" id="MobiDB-lite"/>
    </source>
</evidence>
<evidence type="ECO:0000269" key="4">
    <source>
    </source>
</evidence>
<evidence type="ECO:0000269" key="5">
    <source>
    </source>
</evidence>
<evidence type="ECO:0000305" key="6">
    <source>
    </source>
</evidence>
<keyword id="KW-0539">Nucleus</keyword>
<keyword id="KW-1185">Reference proteome</keyword>
<keyword id="KW-0678">Repressor</keyword>
<keyword id="KW-0804">Transcription</keyword>
<keyword id="KW-0805">Transcription regulation</keyword>
<proteinExistence type="evidence at protein level"/>
<feature type="chain" id="PRO_0000429683" description="Transcription repressor OFP14">
    <location>
        <begin position="1"/>
        <end position="294"/>
    </location>
</feature>
<feature type="domain" description="OVATE" evidence="2">
    <location>
        <begin position="195"/>
        <end position="259"/>
    </location>
</feature>
<feature type="region of interest" description="Disordered" evidence="3">
    <location>
        <begin position="49"/>
        <end position="72"/>
    </location>
</feature>
<feature type="region of interest" description="Disordered" evidence="3">
    <location>
        <begin position="96"/>
        <end position="129"/>
    </location>
</feature>
<feature type="region of interest" description="Disordered" evidence="3">
    <location>
        <begin position="141"/>
        <end position="185"/>
    </location>
</feature>
<feature type="compositionally biased region" description="Basic residues" evidence="3">
    <location>
        <begin position="49"/>
        <end position="60"/>
    </location>
</feature>
<feature type="compositionally biased region" description="Basic and acidic residues" evidence="3">
    <location>
        <begin position="61"/>
        <end position="72"/>
    </location>
</feature>
<feature type="compositionally biased region" description="Basic and acidic residues" evidence="3">
    <location>
        <begin position="96"/>
        <end position="117"/>
    </location>
</feature>
<feature type="compositionally biased region" description="Acidic residues" evidence="3">
    <location>
        <begin position="118"/>
        <end position="128"/>
    </location>
</feature>
<feature type="compositionally biased region" description="Low complexity" evidence="3">
    <location>
        <begin position="164"/>
        <end position="185"/>
    </location>
</feature>
<dbReference type="EMBL" id="AC009322">
    <property type="protein sequence ID" value="AAD55464.1"/>
    <property type="molecule type" value="Genomic_DNA"/>
</dbReference>
<dbReference type="EMBL" id="AC011717">
    <property type="protein sequence ID" value="AAG52238.1"/>
    <property type="molecule type" value="Genomic_DNA"/>
</dbReference>
<dbReference type="EMBL" id="CP002684">
    <property type="protein sequence ID" value="AEE36334.1"/>
    <property type="molecule type" value="Genomic_DNA"/>
</dbReference>
<dbReference type="EMBL" id="DQ056520">
    <property type="protein sequence ID" value="AAY78676.1"/>
    <property type="molecule type" value="mRNA"/>
</dbReference>
<dbReference type="PIR" id="H96830">
    <property type="entry name" value="H96830"/>
</dbReference>
<dbReference type="RefSeq" id="NP_178114.1">
    <property type="nucleotide sequence ID" value="NM_106645.2"/>
</dbReference>
<dbReference type="BioGRID" id="29554">
    <property type="interactions" value="2"/>
</dbReference>
<dbReference type="FunCoup" id="Q9S7T5">
    <property type="interactions" value="151"/>
</dbReference>
<dbReference type="IntAct" id="Q9S7T5">
    <property type="interactions" value="2"/>
</dbReference>
<dbReference type="STRING" id="3702.Q9S7T5"/>
<dbReference type="PaxDb" id="3702-AT1G79960.1"/>
<dbReference type="ProteomicsDB" id="238924"/>
<dbReference type="EnsemblPlants" id="AT1G79960.1">
    <property type="protein sequence ID" value="AT1G79960.1"/>
    <property type="gene ID" value="AT1G79960"/>
</dbReference>
<dbReference type="GeneID" id="844336"/>
<dbReference type="Gramene" id="AT1G79960.1">
    <property type="protein sequence ID" value="AT1G79960.1"/>
    <property type="gene ID" value="AT1G79960"/>
</dbReference>
<dbReference type="KEGG" id="ath:AT1G79960"/>
<dbReference type="Araport" id="AT1G79960"/>
<dbReference type="TAIR" id="AT1G79960">
    <property type="gene designation" value="OFP14"/>
</dbReference>
<dbReference type="eggNOG" id="ENOG502RXZT">
    <property type="taxonomic scope" value="Eukaryota"/>
</dbReference>
<dbReference type="HOGENOM" id="CLU_069722_0_0_1"/>
<dbReference type="InParanoid" id="Q9S7T5"/>
<dbReference type="OMA" id="TSWILRG"/>
<dbReference type="PhylomeDB" id="Q9S7T5"/>
<dbReference type="PRO" id="PR:Q9S7T5"/>
<dbReference type="Proteomes" id="UP000006548">
    <property type="component" value="Chromosome 1"/>
</dbReference>
<dbReference type="ExpressionAtlas" id="Q9S7T5">
    <property type="expression patterns" value="baseline and differential"/>
</dbReference>
<dbReference type="GO" id="GO:0005634">
    <property type="term" value="C:nucleus"/>
    <property type="evidence" value="ECO:0007669"/>
    <property type="project" value="UniProtKB-SubCell"/>
</dbReference>
<dbReference type="GO" id="GO:0045892">
    <property type="term" value="P:negative regulation of DNA-templated transcription"/>
    <property type="evidence" value="ECO:0000314"/>
    <property type="project" value="TAIR"/>
</dbReference>
<dbReference type="InterPro" id="IPR038933">
    <property type="entry name" value="Ovate"/>
</dbReference>
<dbReference type="InterPro" id="IPR006458">
    <property type="entry name" value="Ovate_C"/>
</dbReference>
<dbReference type="NCBIfam" id="TIGR01568">
    <property type="entry name" value="A_thal_3678"/>
    <property type="match status" value="1"/>
</dbReference>
<dbReference type="PANTHER" id="PTHR33057:SF117">
    <property type="entry name" value="TRANSCRIPTION REPRESSOR OFP14"/>
    <property type="match status" value="1"/>
</dbReference>
<dbReference type="PANTHER" id="PTHR33057">
    <property type="entry name" value="TRANSCRIPTION REPRESSOR OFP7-RELATED"/>
    <property type="match status" value="1"/>
</dbReference>
<dbReference type="Pfam" id="PF04844">
    <property type="entry name" value="Ovate"/>
    <property type="match status" value="1"/>
</dbReference>
<dbReference type="PROSITE" id="PS51754">
    <property type="entry name" value="OVATE"/>
    <property type="match status" value="1"/>
</dbReference>
<sequence>MPNPLQKSLHGYLSKIKKETGKLQLSSSHSFSSSKNWVLGKHPKKLSFSFKHRRRSSKTRFSKEEPVYHQDSAHAATLSDIDRFLEENFKSLCIRDDQEDDQHQARVTKNKEKRESSSDDSDDDDDDDDYRHRFERTWGHAVYDSPKQPPDLLRTERLSPPPGSSEGRPSMETTSTSSERQSRSTLVLPENCIAVLRYTDEPQEDFRQSMVEMMESKLGMRESEVDWDLMEELLFCYLDLNDKKSHKFILSAFVDLIIALREKEKRITRKGHVRSLSTRAARDRLRKRMIMSDN</sequence>
<organism>
    <name type="scientific">Arabidopsis thaliana</name>
    <name type="common">Mouse-ear cress</name>
    <dbReference type="NCBI Taxonomy" id="3702"/>
    <lineage>
        <taxon>Eukaryota</taxon>
        <taxon>Viridiplantae</taxon>
        <taxon>Streptophyta</taxon>
        <taxon>Embryophyta</taxon>
        <taxon>Tracheophyta</taxon>
        <taxon>Spermatophyta</taxon>
        <taxon>Magnoliopsida</taxon>
        <taxon>eudicotyledons</taxon>
        <taxon>Gunneridae</taxon>
        <taxon>Pentapetalae</taxon>
        <taxon>rosids</taxon>
        <taxon>malvids</taxon>
        <taxon>Brassicales</taxon>
        <taxon>Brassicaceae</taxon>
        <taxon>Camelineae</taxon>
        <taxon>Arabidopsis</taxon>
    </lineage>
</organism>